<accession>B1H278</accession>
<comment type="function">
    <text evidence="1 2">E3 ubiquitin-protein ligase that promotes the degradation of insoluble ubiquitinated proteins, including insoluble PAX6, poly-Gln repeat expanded HTT and poly-Ala repeat expanded ARX. Mediates PAX6 ubiquitination leading to proteasomal degradation, thereby modulating cortical neurogenesis. May also inhibit PAX6 transcriptional activity, possibly in part by preventing the binding of PAX6 to its consensus sequences. May contribute to the regulation of the intracellular level of HN (humanin) or HN-containing proteins through the proteasomal degradation pathway (By similarity). Mediates MED15 ubiquitination leading to proteasomal degradation. May contribute to the innate restriction of retroviruses. Upon overexpression, reduces HIV-1 and murine leukemia virus infectivity, by suppressing viral gene expression. Antiviral activity depends on a functional E3 ubiquitin-protein ligase domain. May regulate TRIM5 turnover via the proteasome pathway, thus counteracting the TRIM5-mediated cross-species restriction of retroviral infection at early stages of the retroviral life cycle. Acts as an inhibitor of the AIM2 inflammasome by promoting autophagy-dependent degradation of AIM2. Mechanistically, undergoes autoubiquitination upon DNA stimulation, promoting interaction with AIM2 and SQSTM1/p62, leading to AIM2 recruitment to autophagosomes (By similarity).</text>
</comment>
<comment type="catalytic activity">
    <reaction evidence="1">
        <text>S-ubiquitinyl-[E2 ubiquitin-conjugating enzyme]-L-cysteine + [acceptor protein]-L-lysine = [E2 ubiquitin-conjugating enzyme]-L-cysteine + N(6)-ubiquitinyl-[acceptor protein]-L-lysine.</text>
        <dbReference type="EC" id="2.3.2.27"/>
    </reaction>
</comment>
<comment type="pathway">
    <text evidence="1">Protein modification; protein ubiquitination.</text>
</comment>
<comment type="subunit">
    <text evidence="1 2">Binds cytoplasmic tail of integrin alpha-1 (By similarity). Interacts with the HN peptide. Interacts with PHOX2B (By similarity). Interacts (when autoubiquitinated) with SQSTM1/p62; promoting AIM2 recruitment to autophagosomes. Interacts with AIM2; promoting its autophagy-dependent degradation (By similarity).</text>
</comment>
<comment type="subcellular location">
    <subcellularLocation>
        <location evidence="1">Cytoplasm</location>
    </subcellularLocation>
    <subcellularLocation>
        <location evidence="1">Nucleus</location>
    </subcellularLocation>
</comment>
<comment type="domain">
    <text evidence="2">The coiled-coil domain and the B30.2 domain are both necessary for interaction with HN and PAX6. They are also involved in MED15-binding.</text>
</comment>
<comment type="domain">
    <text evidence="2">The B30.2 domain may be involved cellular protein quality control by promoting the degradation of insoluble ubiquitinated proteins.</text>
</comment>
<comment type="PTM">
    <text evidence="1">Autoubiquitinated upon DNA stimulation; autoubiquitination promotes interaction with SQSTM1/p62 and recruitment of AIM2 to autophagosomes.</text>
</comment>
<comment type="similarity">
    <text evidence="8">Belongs to the TRIM/RBCC family.</text>
</comment>
<protein>
    <recommendedName>
        <fullName>E3 ubiquitin-protein ligase TRIM11</fullName>
        <ecNumber evidence="2">2.3.2.27</ecNumber>
    </recommendedName>
    <alternativeName>
        <fullName>Tripartite motif-containing protein 11</fullName>
    </alternativeName>
</protein>
<sequence length="467" mass="52554">MAAPDLSTNLQEEATCAICLDYFTDPVMTDCGHNFCRECIRRCWGQPEGPYACPECREVSAQRNLRPNRPLAKMAEMARRLHPPSPVPQGVCAAHREPLTTFCGDDLSLLCPTCERSEHWAHRVRPLQEAADDLKGRLEKSLEHLRKQMEDAMLFQAQAEETCALWQKMVESQRQNVLGEFERLRRLLAEEEQQLLQKLEEEELEVLPRLREGAARLGQQSTQLAALVSELESRCQLPALGLLQDIKDALCRVQDVKLQPPAVVPMELRTVCRVPGLVETLRRFRGDITLDPDTANPELVLSEDRRSVQRGEQRQALPDSPERFDPGPCVLGQERITSGRHYWEVEVGDQTSWALGVCKETVNRKEKGELSAGNGFWILVFLGSFYNSNERAFSPLRDPPKRVGIFLDYEAGHLSFYSATDGSLLFIFPETPFSGTLRPLFSPLSSSPTPMTICRLIGVSGDTLGPQ</sequence>
<gene>
    <name type="primary">Trim11</name>
</gene>
<proteinExistence type="evidence at transcript level"/>
<feature type="chain" id="PRO_0000396935" description="E3 ubiquitin-protein ligase TRIM11">
    <location>
        <begin position="1"/>
        <end position="467"/>
    </location>
</feature>
<feature type="domain" description="B30.2/SPRY" evidence="6">
    <location>
        <begin position="267"/>
        <end position="460"/>
    </location>
</feature>
<feature type="zinc finger region" description="RING-type" evidence="5">
    <location>
        <begin position="16"/>
        <end position="57"/>
    </location>
</feature>
<feature type="zinc finger region" description="B box-type" evidence="4">
    <location>
        <begin position="87"/>
        <end position="127"/>
    </location>
</feature>
<feature type="region of interest" description="Disordered" evidence="7">
    <location>
        <begin position="304"/>
        <end position="325"/>
    </location>
</feature>
<feature type="coiled-coil region" evidence="3">
    <location>
        <begin position="127"/>
        <end position="207"/>
    </location>
</feature>
<feature type="compositionally biased region" description="Basic and acidic residues" evidence="7">
    <location>
        <begin position="304"/>
        <end position="313"/>
    </location>
</feature>
<feature type="binding site" evidence="4">
    <location>
        <position position="92"/>
    </location>
    <ligand>
        <name>Zn(2+)</name>
        <dbReference type="ChEBI" id="CHEBI:29105"/>
    </ligand>
</feature>
<feature type="binding site" evidence="4">
    <location>
        <position position="95"/>
    </location>
    <ligand>
        <name>Zn(2+)</name>
        <dbReference type="ChEBI" id="CHEBI:29105"/>
    </ligand>
</feature>
<feature type="binding site" evidence="4">
    <location>
        <position position="114"/>
    </location>
    <ligand>
        <name>Zn(2+)</name>
        <dbReference type="ChEBI" id="CHEBI:29105"/>
    </ligand>
</feature>
<feature type="binding site" evidence="4">
    <location>
        <position position="119"/>
    </location>
    <ligand>
        <name>Zn(2+)</name>
        <dbReference type="ChEBI" id="CHEBI:29105"/>
    </ligand>
</feature>
<feature type="modified residue" description="Phosphoserine" evidence="1">
    <location>
        <position position="85"/>
    </location>
</feature>
<dbReference type="EC" id="2.3.2.27" evidence="2"/>
<dbReference type="EMBL" id="BC160894">
    <property type="protein sequence ID" value="AAI60894.1"/>
    <property type="molecule type" value="mRNA"/>
</dbReference>
<dbReference type="RefSeq" id="NP_001386475.1">
    <property type="nucleotide sequence ID" value="NM_001399546.1"/>
</dbReference>
<dbReference type="RefSeq" id="XP_006246567.1">
    <property type="nucleotide sequence ID" value="XM_006246505.3"/>
</dbReference>
<dbReference type="SMR" id="B1H278"/>
<dbReference type="FunCoup" id="B1H278">
    <property type="interactions" value="1343"/>
</dbReference>
<dbReference type="STRING" id="10116.ENSRNOP00000039974"/>
<dbReference type="GlyGen" id="B1H278">
    <property type="glycosylation" value="1 site"/>
</dbReference>
<dbReference type="PhosphoSitePlus" id="B1H278"/>
<dbReference type="PaxDb" id="10116-ENSRNOP00000039974"/>
<dbReference type="Ensembl" id="ENSRNOT00000047268.6">
    <property type="protein sequence ID" value="ENSRNOP00000039974.5"/>
    <property type="gene ID" value="ENSRNOG00000002915.8"/>
</dbReference>
<dbReference type="GeneID" id="360534"/>
<dbReference type="UCSC" id="RGD:1305448">
    <property type="organism name" value="rat"/>
</dbReference>
<dbReference type="AGR" id="RGD:1305448"/>
<dbReference type="RGD" id="1305448">
    <property type="gene designation" value="Trim11"/>
</dbReference>
<dbReference type="eggNOG" id="KOG2177">
    <property type="taxonomic scope" value="Eukaryota"/>
</dbReference>
<dbReference type="GeneTree" id="ENSGT00940000160371"/>
<dbReference type="HOGENOM" id="CLU_013137_0_3_1"/>
<dbReference type="InParanoid" id="B1H278"/>
<dbReference type="OMA" id="CRDNANR"/>
<dbReference type="OrthoDB" id="128536at2759"/>
<dbReference type="Reactome" id="R-RNO-983168">
    <property type="pathway name" value="Antigen processing: Ubiquitination &amp; Proteasome degradation"/>
</dbReference>
<dbReference type="UniPathway" id="UPA00143"/>
<dbReference type="PRO" id="PR:B1H278"/>
<dbReference type="Proteomes" id="UP000002494">
    <property type="component" value="Chromosome 10"/>
</dbReference>
<dbReference type="Bgee" id="ENSRNOG00000002915">
    <property type="expression patterns" value="Expressed in testis and 20 other cell types or tissues"/>
</dbReference>
<dbReference type="GO" id="GO:0005737">
    <property type="term" value="C:cytoplasm"/>
    <property type="evidence" value="ECO:0000266"/>
    <property type="project" value="RGD"/>
</dbReference>
<dbReference type="GO" id="GO:0005829">
    <property type="term" value="C:cytosol"/>
    <property type="evidence" value="ECO:0000318"/>
    <property type="project" value="GO_Central"/>
</dbReference>
<dbReference type="GO" id="GO:0005654">
    <property type="term" value="C:nucleoplasm"/>
    <property type="evidence" value="ECO:0007669"/>
    <property type="project" value="Ensembl"/>
</dbReference>
<dbReference type="GO" id="GO:0005634">
    <property type="term" value="C:nucleus"/>
    <property type="evidence" value="ECO:0000266"/>
    <property type="project" value="RGD"/>
</dbReference>
<dbReference type="GO" id="GO:0019904">
    <property type="term" value="F:protein domain specific binding"/>
    <property type="evidence" value="ECO:0000266"/>
    <property type="project" value="RGD"/>
</dbReference>
<dbReference type="GO" id="GO:0030674">
    <property type="term" value="F:protein-macromolecule adaptor activity"/>
    <property type="evidence" value="ECO:0000250"/>
    <property type="project" value="UniProtKB"/>
</dbReference>
<dbReference type="GO" id="GO:0061630">
    <property type="term" value="F:ubiquitin protein ligase activity"/>
    <property type="evidence" value="ECO:0000266"/>
    <property type="project" value="RGD"/>
</dbReference>
<dbReference type="GO" id="GO:0004842">
    <property type="term" value="F:ubiquitin-protein transferase activity"/>
    <property type="evidence" value="ECO:0000250"/>
    <property type="project" value="UniProtKB"/>
</dbReference>
<dbReference type="GO" id="GO:0008270">
    <property type="term" value="F:zinc ion binding"/>
    <property type="evidence" value="ECO:0007669"/>
    <property type="project" value="UniProtKB-KW"/>
</dbReference>
<dbReference type="GO" id="GO:0046597">
    <property type="term" value="P:host-mediated suppression of symbiont invasion"/>
    <property type="evidence" value="ECO:0000266"/>
    <property type="project" value="RGD"/>
</dbReference>
<dbReference type="GO" id="GO:0045087">
    <property type="term" value="P:innate immune response"/>
    <property type="evidence" value="ECO:0000266"/>
    <property type="project" value="RGD"/>
</dbReference>
<dbReference type="GO" id="GO:0140972">
    <property type="term" value="P:negative regulation of AIM2 inflammasome complex assembly"/>
    <property type="evidence" value="ECO:0000250"/>
    <property type="project" value="UniProtKB"/>
</dbReference>
<dbReference type="GO" id="GO:0045892">
    <property type="term" value="P:negative regulation of DNA-templated transcription"/>
    <property type="evidence" value="ECO:0000266"/>
    <property type="project" value="RGD"/>
</dbReference>
<dbReference type="GO" id="GO:0050768">
    <property type="term" value="P:negative regulation of neurogenesis"/>
    <property type="evidence" value="ECO:0000266"/>
    <property type="project" value="RGD"/>
</dbReference>
<dbReference type="GO" id="GO:0032897">
    <property type="term" value="P:negative regulation of viral transcription"/>
    <property type="evidence" value="ECO:0000266"/>
    <property type="project" value="RGD"/>
</dbReference>
<dbReference type="GO" id="GO:0046598">
    <property type="term" value="P:positive regulation of viral entry into host cell"/>
    <property type="evidence" value="ECO:0000266"/>
    <property type="project" value="RGD"/>
</dbReference>
<dbReference type="GO" id="GO:0051865">
    <property type="term" value="P:protein autoubiquitination"/>
    <property type="evidence" value="ECO:0000266"/>
    <property type="project" value="RGD"/>
</dbReference>
<dbReference type="GO" id="GO:0016567">
    <property type="term" value="P:protein ubiquitination"/>
    <property type="evidence" value="ECO:0000250"/>
    <property type="project" value="UniProtKB"/>
</dbReference>
<dbReference type="GO" id="GO:0010468">
    <property type="term" value="P:regulation of gene expression"/>
    <property type="evidence" value="ECO:0000318"/>
    <property type="project" value="GO_Central"/>
</dbReference>
<dbReference type="GO" id="GO:0044790">
    <property type="term" value="P:suppression of viral release by host"/>
    <property type="evidence" value="ECO:0000266"/>
    <property type="project" value="RGD"/>
</dbReference>
<dbReference type="CDD" id="cd16594">
    <property type="entry name" value="RING-HC_TRIM7-like_C-IV"/>
    <property type="match status" value="1"/>
</dbReference>
<dbReference type="CDD" id="cd15811">
    <property type="entry name" value="SPRY_PRY_TRIM11"/>
    <property type="match status" value="1"/>
</dbReference>
<dbReference type="FunFam" id="2.60.120.920:FF:000004">
    <property type="entry name" value="Butyrophilin subfamily 1 member A1"/>
    <property type="match status" value="1"/>
</dbReference>
<dbReference type="FunFam" id="3.30.40.10:FF:000232">
    <property type="entry name" value="E3 ubiquitin-protein ligase TRIM11"/>
    <property type="match status" value="1"/>
</dbReference>
<dbReference type="Gene3D" id="2.60.120.920">
    <property type="match status" value="1"/>
</dbReference>
<dbReference type="Gene3D" id="3.30.160.60">
    <property type="entry name" value="Classic Zinc Finger"/>
    <property type="match status" value="1"/>
</dbReference>
<dbReference type="Gene3D" id="3.30.40.10">
    <property type="entry name" value="Zinc/RING finger domain, C3HC4 (zinc finger)"/>
    <property type="match status" value="1"/>
</dbReference>
<dbReference type="InterPro" id="IPR001870">
    <property type="entry name" value="B30.2/SPRY"/>
</dbReference>
<dbReference type="InterPro" id="IPR043136">
    <property type="entry name" value="B30.2/SPRY_sf"/>
</dbReference>
<dbReference type="InterPro" id="IPR003879">
    <property type="entry name" value="Butyrophylin_SPRY"/>
</dbReference>
<dbReference type="InterPro" id="IPR013320">
    <property type="entry name" value="ConA-like_dom_sf"/>
</dbReference>
<dbReference type="InterPro" id="IPR006574">
    <property type="entry name" value="PRY"/>
</dbReference>
<dbReference type="InterPro" id="IPR003877">
    <property type="entry name" value="SPRY_dom"/>
</dbReference>
<dbReference type="InterPro" id="IPR050143">
    <property type="entry name" value="TRIM/RBCC"/>
</dbReference>
<dbReference type="InterPro" id="IPR000315">
    <property type="entry name" value="Znf_B-box"/>
</dbReference>
<dbReference type="InterPro" id="IPR001841">
    <property type="entry name" value="Znf_RING"/>
</dbReference>
<dbReference type="InterPro" id="IPR013083">
    <property type="entry name" value="Znf_RING/FYVE/PHD"/>
</dbReference>
<dbReference type="InterPro" id="IPR017907">
    <property type="entry name" value="Znf_RING_CS"/>
</dbReference>
<dbReference type="PANTHER" id="PTHR24103">
    <property type="entry name" value="E3 UBIQUITIN-PROTEIN LIGASE TRIM"/>
    <property type="match status" value="1"/>
</dbReference>
<dbReference type="Pfam" id="PF13765">
    <property type="entry name" value="PRY"/>
    <property type="match status" value="1"/>
</dbReference>
<dbReference type="Pfam" id="PF00622">
    <property type="entry name" value="SPRY"/>
    <property type="match status" value="1"/>
</dbReference>
<dbReference type="Pfam" id="PF00643">
    <property type="entry name" value="zf-B_box"/>
    <property type="match status" value="1"/>
</dbReference>
<dbReference type="Pfam" id="PF15227">
    <property type="entry name" value="zf-C3HC4_4"/>
    <property type="match status" value="1"/>
</dbReference>
<dbReference type="PRINTS" id="PR01407">
    <property type="entry name" value="BUTYPHLNCDUF"/>
</dbReference>
<dbReference type="SMART" id="SM00336">
    <property type="entry name" value="BBOX"/>
    <property type="match status" value="1"/>
</dbReference>
<dbReference type="SMART" id="SM00589">
    <property type="entry name" value="PRY"/>
    <property type="match status" value="1"/>
</dbReference>
<dbReference type="SMART" id="SM00184">
    <property type="entry name" value="RING"/>
    <property type="match status" value="1"/>
</dbReference>
<dbReference type="SMART" id="SM00449">
    <property type="entry name" value="SPRY"/>
    <property type="match status" value="1"/>
</dbReference>
<dbReference type="SUPFAM" id="SSF57845">
    <property type="entry name" value="B-box zinc-binding domain"/>
    <property type="match status" value="1"/>
</dbReference>
<dbReference type="SUPFAM" id="SSF49899">
    <property type="entry name" value="Concanavalin A-like lectins/glucanases"/>
    <property type="match status" value="1"/>
</dbReference>
<dbReference type="SUPFAM" id="SSF57850">
    <property type="entry name" value="RING/U-box"/>
    <property type="match status" value="1"/>
</dbReference>
<dbReference type="PROSITE" id="PS50188">
    <property type="entry name" value="B302_SPRY"/>
    <property type="match status" value="1"/>
</dbReference>
<dbReference type="PROSITE" id="PS50119">
    <property type="entry name" value="ZF_BBOX"/>
    <property type="match status" value="1"/>
</dbReference>
<dbReference type="PROSITE" id="PS00518">
    <property type="entry name" value="ZF_RING_1"/>
    <property type="match status" value="1"/>
</dbReference>
<dbReference type="PROSITE" id="PS50089">
    <property type="entry name" value="ZF_RING_2"/>
    <property type="match status" value="1"/>
</dbReference>
<name>TRI11_RAT</name>
<organism>
    <name type="scientific">Rattus norvegicus</name>
    <name type="common">Rat</name>
    <dbReference type="NCBI Taxonomy" id="10116"/>
    <lineage>
        <taxon>Eukaryota</taxon>
        <taxon>Metazoa</taxon>
        <taxon>Chordata</taxon>
        <taxon>Craniata</taxon>
        <taxon>Vertebrata</taxon>
        <taxon>Euteleostomi</taxon>
        <taxon>Mammalia</taxon>
        <taxon>Eutheria</taxon>
        <taxon>Euarchontoglires</taxon>
        <taxon>Glires</taxon>
        <taxon>Rodentia</taxon>
        <taxon>Myomorpha</taxon>
        <taxon>Muroidea</taxon>
        <taxon>Muridae</taxon>
        <taxon>Murinae</taxon>
        <taxon>Rattus</taxon>
    </lineage>
</organism>
<reference key="1">
    <citation type="journal article" date="2004" name="Genome Res.">
        <title>The status, quality, and expansion of the NIH full-length cDNA project: the Mammalian Gene Collection (MGC).</title>
        <authorList>
            <consortium name="The MGC Project Team"/>
        </authorList>
    </citation>
    <scope>NUCLEOTIDE SEQUENCE [LARGE SCALE MRNA]</scope>
    <source>
        <tissue>Placenta</tissue>
    </source>
</reference>
<keyword id="KW-0051">Antiviral defense</keyword>
<keyword id="KW-0175">Coiled coil</keyword>
<keyword id="KW-0963">Cytoplasm</keyword>
<keyword id="KW-0479">Metal-binding</keyword>
<keyword id="KW-0539">Nucleus</keyword>
<keyword id="KW-0597">Phosphoprotein</keyword>
<keyword id="KW-1185">Reference proteome</keyword>
<keyword id="KW-0808">Transferase</keyword>
<keyword id="KW-0832">Ubl conjugation</keyword>
<keyword id="KW-0833">Ubl conjugation pathway</keyword>
<keyword id="KW-0862">Zinc</keyword>
<keyword id="KW-0863">Zinc-finger</keyword>
<evidence type="ECO:0000250" key="1">
    <source>
        <dbReference type="UniProtKB" id="Q96F44"/>
    </source>
</evidence>
<evidence type="ECO:0000250" key="2">
    <source>
        <dbReference type="UniProtKB" id="Q99PQ2"/>
    </source>
</evidence>
<evidence type="ECO:0000255" key="3"/>
<evidence type="ECO:0000255" key="4">
    <source>
        <dbReference type="PROSITE-ProRule" id="PRU00024"/>
    </source>
</evidence>
<evidence type="ECO:0000255" key="5">
    <source>
        <dbReference type="PROSITE-ProRule" id="PRU00175"/>
    </source>
</evidence>
<evidence type="ECO:0000255" key="6">
    <source>
        <dbReference type="PROSITE-ProRule" id="PRU00548"/>
    </source>
</evidence>
<evidence type="ECO:0000256" key="7">
    <source>
        <dbReference type="SAM" id="MobiDB-lite"/>
    </source>
</evidence>
<evidence type="ECO:0000305" key="8"/>